<protein>
    <recommendedName>
        <fullName evidence="1">Molybdenum import ATP-binding protein ModC</fullName>
        <ecNumber evidence="1">7.3.2.5</ecNumber>
    </recommendedName>
</protein>
<name>MODC_VIBVY</name>
<reference key="1">
    <citation type="journal article" date="2003" name="Genome Res.">
        <title>Comparative genome analysis of Vibrio vulnificus, a marine pathogen.</title>
        <authorList>
            <person name="Chen C.-Y."/>
            <person name="Wu K.-M."/>
            <person name="Chang Y.-C."/>
            <person name="Chang C.-H."/>
            <person name="Tsai H.-C."/>
            <person name="Liao T.-L."/>
            <person name="Liu Y.-M."/>
            <person name="Chen H.-J."/>
            <person name="Shen A.B.-T."/>
            <person name="Li J.-C."/>
            <person name="Su T.-L."/>
            <person name="Shao C.-P."/>
            <person name="Lee C.-T."/>
            <person name="Hor L.-I."/>
            <person name="Tsai S.-F."/>
        </authorList>
    </citation>
    <scope>NUCLEOTIDE SEQUENCE [LARGE SCALE GENOMIC DNA]</scope>
    <source>
        <strain>YJ016</strain>
    </source>
</reference>
<accession>Q7ME63</accession>
<dbReference type="EC" id="7.3.2.5" evidence="1"/>
<dbReference type="EMBL" id="BA000038">
    <property type="protein sequence ID" value="BAC96847.1"/>
    <property type="status" value="ALT_INIT"/>
    <property type="molecule type" value="Genomic_DNA"/>
</dbReference>
<dbReference type="RefSeq" id="WP_011152135.1">
    <property type="nucleotide sequence ID" value="NC_005140.1"/>
</dbReference>
<dbReference type="SMR" id="Q7ME63"/>
<dbReference type="STRING" id="672.VV93_v1c38280"/>
<dbReference type="KEGG" id="vvy:VVA0821"/>
<dbReference type="PATRIC" id="fig|196600.6.peg.4005"/>
<dbReference type="eggNOG" id="COG4148">
    <property type="taxonomic scope" value="Bacteria"/>
</dbReference>
<dbReference type="HOGENOM" id="CLU_000604_1_1_6"/>
<dbReference type="Proteomes" id="UP000002675">
    <property type="component" value="Chromosome II"/>
</dbReference>
<dbReference type="GO" id="GO:0005886">
    <property type="term" value="C:plasma membrane"/>
    <property type="evidence" value="ECO:0007669"/>
    <property type="project" value="UniProtKB-SubCell"/>
</dbReference>
<dbReference type="GO" id="GO:0015412">
    <property type="term" value="F:ABC-type molybdate transporter activity"/>
    <property type="evidence" value="ECO:0007669"/>
    <property type="project" value="UniProtKB-EC"/>
</dbReference>
<dbReference type="GO" id="GO:0005524">
    <property type="term" value="F:ATP binding"/>
    <property type="evidence" value="ECO:0007669"/>
    <property type="project" value="UniProtKB-KW"/>
</dbReference>
<dbReference type="GO" id="GO:0016887">
    <property type="term" value="F:ATP hydrolysis activity"/>
    <property type="evidence" value="ECO:0007669"/>
    <property type="project" value="InterPro"/>
</dbReference>
<dbReference type="FunFam" id="3.40.50.300:FF:000634">
    <property type="entry name" value="Molybdenum import ATP-binding protein ModC"/>
    <property type="match status" value="1"/>
</dbReference>
<dbReference type="Gene3D" id="2.40.50.100">
    <property type="match status" value="1"/>
</dbReference>
<dbReference type="Gene3D" id="3.40.50.300">
    <property type="entry name" value="P-loop containing nucleotide triphosphate hydrolases"/>
    <property type="match status" value="1"/>
</dbReference>
<dbReference type="InterPro" id="IPR003593">
    <property type="entry name" value="AAA+_ATPase"/>
</dbReference>
<dbReference type="InterPro" id="IPR003439">
    <property type="entry name" value="ABC_transporter-like_ATP-bd"/>
</dbReference>
<dbReference type="InterPro" id="IPR017871">
    <property type="entry name" value="ABC_transporter-like_CS"/>
</dbReference>
<dbReference type="InterPro" id="IPR008995">
    <property type="entry name" value="Mo/tungstate-bd_C_term_dom"/>
</dbReference>
<dbReference type="InterPro" id="IPR011868">
    <property type="entry name" value="ModC_ABC_ATP-bd"/>
</dbReference>
<dbReference type="InterPro" id="IPR050334">
    <property type="entry name" value="Molybdenum_import_ModC"/>
</dbReference>
<dbReference type="InterPro" id="IPR004606">
    <property type="entry name" value="Mop_domain"/>
</dbReference>
<dbReference type="InterPro" id="IPR027417">
    <property type="entry name" value="P-loop_NTPase"/>
</dbReference>
<dbReference type="InterPro" id="IPR005116">
    <property type="entry name" value="Transp-assoc_OB_typ1"/>
</dbReference>
<dbReference type="NCBIfam" id="TIGR02142">
    <property type="entry name" value="modC_ABC"/>
    <property type="match status" value="1"/>
</dbReference>
<dbReference type="NCBIfam" id="NF008355">
    <property type="entry name" value="PRK11144.1"/>
    <property type="match status" value="1"/>
</dbReference>
<dbReference type="PANTHER" id="PTHR43514">
    <property type="entry name" value="ABC TRANSPORTER I FAMILY MEMBER 10"/>
    <property type="match status" value="1"/>
</dbReference>
<dbReference type="PANTHER" id="PTHR43514:SF4">
    <property type="entry name" value="ABC TRANSPORTER I FAMILY MEMBER 10"/>
    <property type="match status" value="1"/>
</dbReference>
<dbReference type="Pfam" id="PF00005">
    <property type="entry name" value="ABC_tran"/>
    <property type="match status" value="1"/>
</dbReference>
<dbReference type="Pfam" id="PF03459">
    <property type="entry name" value="TOBE"/>
    <property type="match status" value="1"/>
</dbReference>
<dbReference type="SMART" id="SM00382">
    <property type="entry name" value="AAA"/>
    <property type="match status" value="1"/>
</dbReference>
<dbReference type="SUPFAM" id="SSF50331">
    <property type="entry name" value="MOP-like"/>
    <property type="match status" value="1"/>
</dbReference>
<dbReference type="SUPFAM" id="SSF52540">
    <property type="entry name" value="P-loop containing nucleoside triphosphate hydrolases"/>
    <property type="match status" value="1"/>
</dbReference>
<dbReference type="PROSITE" id="PS00211">
    <property type="entry name" value="ABC_TRANSPORTER_1"/>
    <property type="match status" value="1"/>
</dbReference>
<dbReference type="PROSITE" id="PS50893">
    <property type="entry name" value="ABC_TRANSPORTER_2"/>
    <property type="match status" value="1"/>
</dbReference>
<dbReference type="PROSITE" id="PS51241">
    <property type="entry name" value="MODC"/>
    <property type="match status" value="1"/>
</dbReference>
<dbReference type="PROSITE" id="PS51866">
    <property type="entry name" value="MOP"/>
    <property type="match status" value="1"/>
</dbReference>
<gene>
    <name evidence="1" type="primary">modC</name>
    <name type="ordered locus">VVA0821</name>
</gene>
<comment type="function">
    <text evidence="1">Part of the ABC transporter complex ModABC involved in molybdenum import. Responsible for energy coupling to the transport system.</text>
</comment>
<comment type="catalytic activity">
    <reaction evidence="1">
        <text>molybdate(out) + ATP + H2O = molybdate(in) + ADP + phosphate + H(+)</text>
        <dbReference type="Rhea" id="RHEA:22020"/>
        <dbReference type="ChEBI" id="CHEBI:15377"/>
        <dbReference type="ChEBI" id="CHEBI:15378"/>
        <dbReference type="ChEBI" id="CHEBI:30616"/>
        <dbReference type="ChEBI" id="CHEBI:36264"/>
        <dbReference type="ChEBI" id="CHEBI:43474"/>
        <dbReference type="ChEBI" id="CHEBI:456216"/>
        <dbReference type="EC" id="7.3.2.5"/>
    </reaction>
</comment>
<comment type="subunit">
    <text evidence="1">The complex is composed of two ATP-binding proteins (ModC), two transmembrane proteins (ModB) and a solute-binding protein (ModA).</text>
</comment>
<comment type="subcellular location">
    <subcellularLocation>
        <location evidence="1">Cell inner membrane</location>
        <topology evidence="1">Peripheral membrane protein</topology>
    </subcellularLocation>
</comment>
<comment type="similarity">
    <text evidence="1">Belongs to the ABC transporter superfamily. Molybdate importer (TC 3.A.1.8) family.</text>
</comment>
<comment type="sequence caution" evidence="3">
    <conflict type="erroneous initiation">
        <sequence resource="EMBL-CDS" id="BAC96847"/>
    </conflict>
</comment>
<sequence>MKGLQVAFKQTLGHVVFDIELQLPSKGVSAIFGRSGAGKTSIINVISGLTQPEQGRIALNSDVLFDSVLGINVPVHQRNIGYVFQDSRLFPHYHVEGNLKYGVKQYDAEMFDKVVALLALQPLLKRYPASLSGGEKQRVAIGRALLSSPKILLMDEPLASLDMPRKKEVLPFLEKLSESFEIPIVYVTHSLQEILRLADHLTVLDRGQIVASGVLSEVWSSQAMRPWQSFSEQSTLFNANIAEQHPQYALTRVMLSSTASLWVQKIDAPLGSDIRLQVRANDVSITLVQPQKTSIRNIIEAKVERVEKRHPAEDKESIAVKLALTQDCFLWATITPWALADLNLKQGDRVFAQIKGVSVTQRDIALTH</sequence>
<keyword id="KW-0067">ATP-binding</keyword>
<keyword id="KW-0997">Cell inner membrane</keyword>
<keyword id="KW-1003">Cell membrane</keyword>
<keyword id="KW-0472">Membrane</keyword>
<keyword id="KW-0500">Molybdenum</keyword>
<keyword id="KW-0547">Nucleotide-binding</keyword>
<keyword id="KW-1278">Translocase</keyword>
<keyword id="KW-0813">Transport</keyword>
<organism>
    <name type="scientific">Vibrio vulnificus (strain YJ016)</name>
    <dbReference type="NCBI Taxonomy" id="196600"/>
    <lineage>
        <taxon>Bacteria</taxon>
        <taxon>Pseudomonadati</taxon>
        <taxon>Pseudomonadota</taxon>
        <taxon>Gammaproteobacteria</taxon>
        <taxon>Vibrionales</taxon>
        <taxon>Vibrionaceae</taxon>
        <taxon>Vibrio</taxon>
    </lineage>
</organism>
<evidence type="ECO:0000255" key="1">
    <source>
        <dbReference type="HAMAP-Rule" id="MF_01705"/>
    </source>
</evidence>
<evidence type="ECO:0000255" key="2">
    <source>
        <dbReference type="PROSITE-ProRule" id="PRU01213"/>
    </source>
</evidence>
<evidence type="ECO:0000305" key="3"/>
<proteinExistence type="inferred from homology"/>
<feature type="chain" id="PRO_0000092562" description="Molybdenum import ATP-binding protein ModC">
    <location>
        <begin position="1"/>
        <end position="368"/>
    </location>
</feature>
<feature type="domain" description="ABC transporter" evidence="1">
    <location>
        <begin position="1"/>
        <end position="231"/>
    </location>
</feature>
<feature type="domain" description="Mop" evidence="2">
    <location>
        <begin position="292"/>
        <end position="363"/>
    </location>
</feature>
<feature type="binding site" evidence="1">
    <location>
        <begin position="33"/>
        <end position="40"/>
    </location>
    <ligand>
        <name>ATP</name>
        <dbReference type="ChEBI" id="CHEBI:30616"/>
    </ligand>
</feature>